<name>GLYA_SPHAL</name>
<feature type="chain" id="PRO_1000091580" description="Serine hydroxymethyltransferase">
    <location>
        <begin position="1"/>
        <end position="435"/>
    </location>
</feature>
<feature type="binding site" evidence="1">
    <location>
        <position position="133"/>
    </location>
    <ligand>
        <name>(6S)-5,6,7,8-tetrahydrofolate</name>
        <dbReference type="ChEBI" id="CHEBI:57453"/>
    </ligand>
</feature>
<feature type="binding site" evidence="1">
    <location>
        <begin position="137"/>
        <end position="139"/>
    </location>
    <ligand>
        <name>(6S)-5,6,7,8-tetrahydrofolate</name>
        <dbReference type="ChEBI" id="CHEBI:57453"/>
    </ligand>
</feature>
<feature type="site" description="Plays an important role in substrate specificity" evidence="1">
    <location>
        <position position="241"/>
    </location>
</feature>
<feature type="modified residue" description="N6-(pyridoxal phosphate)lysine" evidence="1">
    <location>
        <position position="242"/>
    </location>
</feature>
<evidence type="ECO:0000255" key="1">
    <source>
        <dbReference type="HAMAP-Rule" id="MF_00051"/>
    </source>
</evidence>
<accession>Q1GV11</accession>
<comment type="function">
    <text evidence="1">Catalyzes the reversible interconversion of serine and glycine with tetrahydrofolate (THF) serving as the one-carbon carrier. This reaction serves as the major source of one-carbon groups required for the biosynthesis of purines, thymidylate, methionine, and other important biomolecules. Also exhibits THF-independent aldolase activity toward beta-hydroxyamino acids, producing glycine and aldehydes, via a retro-aldol mechanism.</text>
</comment>
<comment type="catalytic activity">
    <reaction evidence="1">
        <text>(6R)-5,10-methylene-5,6,7,8-tetrahydrofolate + glycine + H2O = (6S)-5,6,7,8-tetrahydrofolate + L-serine</text>
        <dbReference type="Rhea" id="RHEA:15481"/>
        <dbReference type="ChEBI" id="CHEBI:15377"/>
        <dbReference type="ChEBI" id="CHEBI:15636"/>
        <dbReference type="ChEBI" id="CHEBI:33384"/>
        <dbReference type="ChEBI" id="CHEBI:57305"/>
        <dbReference type="ChEBI" id="CHEBI:57453"/>
        <dbReference type="EC" id="2.1.2.1"/>
    </reaction>
</comment>
<comment type="cofactor">
    <cofactor evidence="1">
        <name>pyridoxal 5'-phosphate</name>
        <dbReference type="ChEBI" id="CHEBI:597326"/>
    </cofactor>
</comment>
<comment type="pathway">
    <text evidence="1">One-carbon metabolism; tetrahydrofolate interconversion.</text>
</comment>
<comment type="pathway">
    <text evidence="1">Amino-acid biosynthesis; glycine biosynthesis; glycine from L-serine: step 1/1.</text>
</comment>
<comment type="subunit">
    <text evidence="1">Homodimer.</text>
</comment>
<comment type="subcellular location">
    <subcellularLocation>
        <location evidence="1">Cytoplasm</location>
    </subcellularLocation>
</comment>
<comment type="similarity">
    <text evidence="1">Belongs to the SHMT family.</text>
</comment>
<gene>
    <name evidence="1" type="primary">glyA</name>
    <name type="ordered locus">Sala_0791</name>
</gene>
<organism>
    <name type="scientific">Sphingopyxis alaskensis (strain DSM 13593 / LMG 18877 / RB2256)</name>
    <name type="common">Sphingomonas alaskensis</name>
    <dbReference type="NCBI Taxonomy" id="317655"/>
    <lineage>
        <taxon>Bacteria</taxon>
        <taxon>Pseudomonadati</taxon>
        <taxon>Pseudomonadota</taxon>
        <taxon>Alphaproteobacteria</taxon>
        <taxon>Sphingomonadales</taxon>
        <taxon>Sphingomonadaceae</taxon>
        <taxon>Sphingopyxis</taxon>
    </lineage>
</organism>
<proteinExistence type="inferred from homology"/>
<keyword id="KW-0028">Amino-acid biosynthesis</keyword>
<keyword id="KW-0963">Cytoplasm</keyword>
<keyword id="KW-0554">One-carbon metabolism</keyword>
<keyword id="KW-0663">Pyridoxal phosphate</keyword>
<keyword id="KW-1185">Reference proteome</keyword>
<keyword id="KW-0808">Transferase</keyword>
<dbReference type="EC" id="2.1.2.1" evidence="1"/>
<dbReference type="EMBL" id="CP000356">
    <property type="protein sequence ID" value="ABF52511.1"/>
    <property type="molecule type" value="Genomic_DNA"/>
</dbReference>
<dbReference type="RefSeq" id="WP_011541101.1">
    <property type="nucleotide sequence ID" value="NC_008048.1"/>
</dbReference>
<dbReference type="SMR" id="Q1GV11"/>
<dbReference type="STRING" id="317655.Sala_0791"/>
<dbReference type="KEGG" id="sal:Sala_0791"/>
<dbReference type="eggNOG" id="COG0112">
    <property type="taxonomic scope" value="Bacteria"/>
</dbReference>
<dbReference type="HOGENOM" id="CLU_022477_2_1_5"/>
<dbReference type="OrthoDB" id="9803846at2"/>
<dbReference type="UniPathway" id="UPA00193"/>
<dbReference type="UniPathway" id="UPA00288">
    <property type="reaction ID" value="UER01023"/>
</dbReference>
<dbReference type="Proteomes" id="UP000006578">
    <property type="component" value="Chromosome"/>
</dbReference>
<dbReference type="GO" id="GO:0005829">
    <property type="term" value="C:cytosol"/>
    <property type="evidence" value="ECO:0007669"/>
    <property type="project" value="TreeGrafter"/>
</dbReference>
<dbReference type="GO" id="GO:0004372">
    <property type="term" value="F:glycine hydroxymethyltransferase activity"/>
    <property type="evidence" value="ECO:0007669"/>
    <property type="project" value="UniProtKB-UniRule"/>
</dbReference>
<dbReference type="GO" id="GO:0030170">
    <property type="term" value="F:pyridoxal phosphate binding"/>
    <property type="evidence" value="ECO:0007669"/>
    <property type="project" value="UniProtKB-UniRule"/>
</dbReference>
<dbReference type="GO" id="GO:0019264">
    <property type="term" value="P:glycine biosynthetic process from serine"/>
    <property type="evidence" value="ECO:0007669"/>
    <property type="project" value="UniProtKB-UniRule"/>
</dbReference>
<dbReference type="GO" id="GO:0035999">
    <property type="term" value="P:tetrahydrofolate interconversion"/>
    <property type="evidence" value="ECO:0007669"/>
    <property type="project" value="UniProtKB-UniRule"/>
</dbReference>
<dbReference type="CDD" id="cd00378">
    <property type="entry name" value="SHMT"/>
    <property type="match status" value="1"/>
</dbReference>
<dbReference type="FunFam" id="3.40.640.10:FF:000001">
    <property type="entry name" value="Serine hydroxymethyltransferase"/>
    <property type="match status" value="1"/>
</dbReference>
<dbReference type="Gene3D" id="3.90.1150.10">
    <property type="entry name" value="Aspartate Aminotransferase, domain 1"/>
    <property type="match status" value="1"/>
</dbReference>
<dbReference type="Gene3D" id="3.40.640.10">
    <property type="entry name" value="Type I PLP-dependent aspartate aminotransferase-like (Major domain)"/>
    <property type="match status" value="1"/>
</dbReference>
<dbReference type="HAMAP" id="MF_00051">
    <property type="entry name" value="SHMT"/>
    <property type="match status" value="1"/>
</dbReference>
<dbReference type="InterPro" id="IPR015424">
    <property type="entry name" value="PyrdxlP-dep_Trfase"/>
</dbReference>
<dbReference type="InterPro" id="IPR015421">
    <property type="entry name" value="PyrdxlP-dep_Trfase_major"/>
</dbReference>
<dbReference type="InterPro" id="IPR015422">
    <property type="entry name" value="PyrdxlP-dep_Trfase_small"/>
</dbReference>
<dbReference type="InterPro" id="IPR001085">
    <property type="entry name" value="Ser_HO-MeTrfase"/>
</dbReference>
<dbReference type="InterPro" id="IPR049943">
    <property type="entry name" value="Ser_HO-MeTrfase-like"/>
</dbReference>
<dbReference type="InterPro" id="IPR019798">
    <property type="entry name" value="Ser_HO-MeTrfase_PLP_BS"/>
</dbReference>
<dbReference type="InterPro" id="IPR039429">
    <property type="entry name" value="SHMT-like_dom"/>
</dbReference>
<dbReference type="NCBIfam" id="NF000586">
    <property type="entry name" value="PRK00011.1"/>
    <property type="match status" value="1"/>
</dbReference>
<dbReference type="PANTHER" id="PTHR11680">
    <property type="entry name" value="SERINE HYDROXYMETHYLTRANSFERASE"/>
    <property type="match status" value="1"/>
</dbReference>
<dbReference type="PANTHER" id="PTHR11680:SF35">
    <property type="entry name" value="SERINE HYDROXYMETHYLTRANSFERASE 1"/>
    <property type="match status" value="1"/>
</dbReference>
<dbReference type="Pfam" id="PF00464">
    <property type="entry name" value="SHMT"/>
    <property type="match status" value="1"/>
</dbReference>
<dbReference type="PIRSF" id="PIRSF000412">
    <property type="entry name" value="SHMT"/>
    <property type="match status" value="1"/>
</dbReference>
<dbReference type="SUPFAM" id="SSF53383">
    <property type="entry name" value="PLP-dependent transferases"/>
    <property type="match status" value="1"/>
</dbReference>
<dbReference type="PROSITE" id="PS00096">
    <property type="entry name" value="SHMT"/>
    <property type="match status" value="1"/>
</dbReference>
<sequence>MTTETLDKPIKSAGYFTDGVAIVDPAVAAAMTRELEREQYQIELIASENIVSRAVLEAQGSVFTNKYAEGYPGRRYYQGCAPSDEVEQLAIDRAKQLFDCGYANVQPHSGAQANGAVMLALTKPGATILGMSLDAGGHLTHGAPPAMSGKWFNAVQYGVRADDHLVDFDQVEALAREHRPALIIAGGSAYPRTLDFARFRAIADDVGALLMVDMAHFAGLVAGGAHPSPMQYAHVVTTTTHKTLRGPRGGMILTNDEAIAKRINSAVFPGLQGGPLMHVIAAKAVAFGEALRPEFKDYAKATIANAQALANRLKARGADIVAGGTDTHLALIDLRPLGITGRDADEALERSAITCNKNGVPFDPLPPVKTSGIRVGSPAGTTRGFGIAEFEAIGDMVADVLDALRDKGEHGDADVEADVRGRVRALCERFPIYQG</sequence>
<reference key="1">
    <citation type="journal article" date="2009" name="Proc. Natl. Acad. Sci. U.S.A.">
        <title>The genomic basis of trophic strategy in marine bacteria.</title>
        <authorList>
            <person name="Lauro F.M."/>
            <person name="McDougald D."/>
            <person name="Thomas T."/>
            <person name="Williams T.J."/>
            <person name="Egan S."/>
            <person name="Rice S."/>
            <person name="DeMaere M.Z."/>
            <person name="Ting L."/>
            <person name="Ertan H."/>
            <person name="Johnson J."/>
            <person name="Ferriera S."/>
            <person name="Lapidus A."/>
            <person name="Anderson I."/>
            <person name="Kyrpides N."/>
            <person name="Munk A.C."/>
            <person name="Detter C."/>
            <person name="Han C.S."/>
            <person name="Brown M.V."/>
            <person name="Robb F.T."/>
            <person name="Kjelleberg S."/>
            <person name="Cavicchioli R."/>
        </authorList>
    </citation>
    <scope>NUCLEOTIDE SEQUENCE [LARGE SCALE GENOMIC DNA]</scope>
    <source>
        <strain>DSM 13593 / LMG 18877 / RB2256</strain>
    </source>
</reference>
<protein>
    <recommendedName>
        <fullName evidence="1">Serine hydroxymethyltransferase</fullName>
        <shortName evidence="1">SHMT</shortName>
        <shortName evidence="1">Serine methylase</shortName>
        <ecNumber evidence="1">2.1.2.1</ecNumber>
    </recommendedName>
</protein>